<comment type="function">
    <text evidence="1">Required for the formation of a threonylcarbamoyl group on adenosine at position 37 (t(6)A37) in tRNAs that read codons beginning with adenine. Is involved in the transfer of the threonylcarbamoyl moiety of threonylcarbamoyl-AMP (TC-AMP) to the N6 group of A37, together with TsaE and TsaB. TsaD likely plays a direct catalytic role in this reaction.</text>
</comment>
<comment type="catalytic activity">
    <reaction evidence="1">
        <text>L-threonylcarbamoyladenylate + adenosine(37) in tRNA = N(6)-L-threonylcarbamoyladenosine(37) in tRNA + AMP + H(+)</text>
        <dbReference type="Rhea" id="RHEA:37059"/>
        <dbReference type="Rhea" id="RHEA-COMP:10162"/>
        <dbReference type="Rhea" id="RHEA-COMP:10163"/>
        <dbReference type="ChEBI" id="CHEBI:15378"/>
        <dbReference type="ChEBI" id="CHEBI:73682"/>
        <dbReference type="ChEBI" id="CHEBI:74411"/>
        <dbReference type="ChEBI" id="CHEBI:74418"/>
        <dbReference type="ChEBI" id="CHEBI:456215"/>
        <dbReference type="EC" id="2.3.1.234"/>
    </reaction>
</comment>
<comment type="cofactor">
    <cofactor evidence="1">
        <name>Fe(2+)</name>
        <dbReference type="ChEBI" id="CHEBI:29033"/>
    </cofactor>
    <text evidence="1">Binds 1 Fe(2+) ion per subunit.</text>
</comment>
<comment type="subcellular location">
    <subcellularLocation>
        <location evidence="1">Cytoplasm</location>
    </subcellularLocation>
</comment>
<comment type="similarity">
    <text evidence="1">Belongs to the KAE1 / TsaD family.</text>
</comment>
<keyword id="KW-0012">Acyltransferase</keyword>
<keyword id="KW-0963">Cytoplasm</keyword>
<keyword id="KW-0408">Iron</keyword>
<keyword id="KW-0479">Metal-binding</keyword>
<keyword id="KW-0808">Transferase</keyword>
<keyword id="KW-0819">tRNA processing</keyword>
<dbReference type="EC" id="2.3.1.234" evidence="1"/>
<dbReference type="EMBL" id="FM242711">
    <property type="protein sequence ID" value="CAS05855.1"/>
    <property type="molecule type" value="Genomic_DNA"/>
</dbReference>
<dbReference type="SMR" id="C1KX28"/>
<dbReference type="KEGG" id="lmc:Lm4b_02096"/>
<dbReference type="HOGENOM" id="CLU_023208_0_2_9"/>
<dbReference type="GO" id="GO:0005737">
    <property type="term" value="C:cytoplasm"/>
    <property type="evidence" value="ECO:0007669"/>
    <property type="project" value="UniProtKB-SubCell"/>
</dbReference>
<dbReference type="GO" id="GO:0005506">
    <property type="term" value="F:iron ion binding"/>
    <property type="evidence" value="ECO:0007669"/>
    <property type="project" value="UniProtKB-UniRule"/>
</dbReference>
<dbReference type="GO" id="GO:0061711">
    <property type="term" value="F:N(6)-L-threonylcarbamoyladenine synthase activity"/>
    <property type="evidence" value="ECO:0007669"/>
    <property type="project" value="UniProtKB-EC"/>
</dbReference>
<dbReference type="GO" id="GO:0002949">
    <property type="term" value="P:tRNA threonylcarbamoyladenosine modification"/>
    <property type="evidence" value="ECO:0007669"/>
    <property type="project" value="UniProtKB-UniRule"/>
</dbReference>
<dbReference type="CDD" id="cd24133">
    <property type="entry name" value="ASKHA_NBD_TsaD_bac"/>
    <property type="match status" value="1"/>
</dbReference>
<dbReference type="FunFam" id="3.30.420.40:FF:000012">
    <property type="entry name" value="tRNA N6-adenosine threonylcarbamoyltransferase"/>
    <property type="match status" value="1"/>
</dbReference>
<dbReference type="FunFam" id="3.30.420.40:FF:000040">
    <property type="entry name" value="tRNA N6-adenosine threonylcarbamoyltransferase"/>
    <property type="match status" value="1"/>
</dbReference>
<dbReference type="Gene3D" id="3.30.420.40">
    <property type="match status" value="2"/>
</dbReference>
<dbReference type="HAMAP" id="MF_01445">
    <property type="entry name" value="TsaD"/>
    <property type="match status" value="1"/>
</dbReference>
<dbReference type="InterPro" id="IPR043129">
    <property type="entry name" value="ATPase_NBD"/>
</dbReference>
<dbReference type="InterPro" id="IPR000905">
    <property type="entry name" value="Gcp-like_dom"/>
</dbReference>
<dbReference type="InterPro" id="IPR017861">
    <property type="entry name" value="KAE1/TsaD"/>
</dbReference>
<dbReference type="InterPro" id="IPR017860">
    <property type="entry name" value="Peptidase_M22_CS"/>
</dbReference>
<dbReference type="InterPro" id="IPR022450">
    <property type="entry name" value="TsaD"/>
</dbReference>
<dbReference type="NCBIfam" id="TIGR00329">
    <property type="entry name" value="gcp_kae1"/>
    <property type="match status" value="1"/>
</dbReference>
<dbReference type="NCBIfam" id="TIGR03723">
    <property type="entry name" value="T6A_TsaD_YgjD"/>
    <property type="match status" value="1"/>
</dbReference>
<dbReference type="PANTHER" id="PTHR11735">
    <property type="entry name" value="TRNA N6-ADENOSINE THREONYLCARBAMOYLTRANSFERASE"/>
    <property type="match status" value="1"/>
</dbReference>
<dbReference type="PANTHER" id="PTHR11735:SF6">
    <property type="entry name" value="TRNA N6-ADENOSINE THREONYLCARBAMOYLTRANSFERASE, MITOCHONDRIAL"/>
    <property type="match status" value="1"/>
</dbReference>
<dbReference type="Pfam" id="PF00814">
    <property type="entry name" value="TsaD"/>
    <property type="match status" value="1"/>
</dbReference>
<dbReference type="PRINTS" id="PR00789">
    <property type="entry name" value="OSIALOPTASE"/>
</dbReference>
<dbReference type="SUPFAM" id="SSF53067">
    <property type="entry name" value="Actin-like ATPase domain"/>
    <property type="match status" value="2"/>
</dbReference>
<dbReference type="PROSITE" id="PS01016">
    <property type="entry name" value="GLYCOPROTEASE"/>
    <property type="match status" value="1"/>
</dbReference>
<feature type="chain" id="PRO_1000215304" description="tRNA N6-adenosine threonylcarbamoyltransferase">
    <location>
        <begin position="1"/>
        <end position="344"/>
    </location>
</feature>
<feature type="binding site" evidence="1">
    <location>
        <position position="119"/>
    </location>
    <ligand>
        <name>Fe cation</name>
        <dbReference type="ChEBI" id="CHEBI:24875"/>
    </ligand>
</feature>
<feature type="binding site" evidence="1">
    <location>
        <position position="123"/>
    </location>
    <ligand>
        <name>Fe cation</name>
        <dbReference type="ChEBI" id="CHEBI:24875"/>
    </ligand>
</feature>
<feature type="binding site" evidence="1">
    <location>
        <begin position="141"/>
        <end position="145"/>
    </location>
    <ligand>
        <name>substrate</name>
    </ligand>
</feature>
<feature type="binding site" evidence="1">
    <location>
        <position position="174"/>
    </location>
    <ligand>
        <name>substrate</name>
    </ligand>
</feature>
<feature type="binding site" evidence="1">
    <location>
        <position position="187"/>
    </location>
    <ligand>
        <name>substrate</name>
    </ligand>
</feature>
<feature type="binding site" evidence="1">
    <location>
        <position position="191"/>
    </location>
    <ligand>
        <name>substrate</name>
    </ligand>
</feature>
<feature type="binding site" evidence="1">
    <location>
        <position position="280"/>
    </location>
    <ligand>
        <name>substrate</name>
    </ligand>
</feature>
<feature type="binding site" evidence="1">
    <location>
        <position position="310"/>
    </location>
    <ligand>
        <name>Fe cation</name>
        <dbReference type="ChEBI" id="CHEBI:24875"/>
    </ligand>
</feature>
<evidence type="ECO:0000255" key="1">
    <source>
        <dbReference type="HAMAP-Rule" id="MF_01445"/>
    </source>
</evidence>
<sequence>MGGLMKKNTLILGIESSCDETAASVVKNGNEIISSVVASQIESHKRFGGVVPEIASRHHVEQITLVIEEALKQANVTMDDLDGIAVTEGPGLVGALLIGVNAAKTLAFMHNLPLVGVHHIAGHIYANRFETEFKFPLLSLVVSGGHTELVLMKADNEFEIIGETRDDAAGEAYDKVARTLGLAYPGGVQIDKLAKDGEDTFHFPRAMMDEGSFDFSFSGLKSSFINTLHNLRQRGEEPNPNDMAASFQASVVDVLVSKTIRAAKQYDVKQLLLAGGVAANQGLRERLIQEVKLELPETELIIPPLALCGDNAAMIAAAGTVSFLQGKRSGFDMNANPGLLLEDI</sequence>
<reference key="1">
    <citation type="journal article" date="2012" name="BMC Genomics">
        <title>Comparative genomics and transcriptomics of lineages I, II, and III strains of Listeria monocytogenes.</title>
        <authorList>
            <person name="Hain T."/>
            <person name="Ghai R."/>
            <person name="Billion A."/>
            <person name="Kuenne C.T."/>
            <person name="Steinweg C."/>
            <person name="Izar B."/>
            <person name="Mohamed W."/>
            <person name="Mraheil M."/>
            <person name="Domann E."/>
            <person name="Schaffrath S."/>
            <person name="Karst U."/>
            <person name="Goesmann A."/>
            <person name="Oehm S."/>
            <person name="Puhler A."/>
            <person name="Merkl R."/>
            <person name="Vorwerk S."/>
            <person name="Glaser P."/>
            <person name="Garrido P."/>
            <person name="Rusniok C."/>
            <person name="Buchrieser C."/>
            <person name="Goebel W."/>
            <person name="Chakraborty T."/>
        </authorList>
    </citation>
    <scope>NUCLEOTIDE SEQUENCE [LARGE SCALE GENOMIC DNA]</scope>
    <source>
        <strain>CLIP80459</strain>
    </source>
</reference>
<organism>
    <name type="scientific">Listeria monocytogenes serotype 4b (strain CLIP80459)</name>
    <dbReference type="NCBI Taxonomy" id="568819"/>
    <lineage>
        <taxon>Bacteria</taxon>
        <taxon>Bacillati</taxon>
        <taxon>Bacillota</taxon>
        <taxon>Bacilli</taxon>
        <taxon>Bacillales</taxon>
        <taxon>Listeriaceae</taxon>
        <taxon>Listeria</taxon>
    </lineage>
</organism>
<protein>
    <recommendedName>
        <fullName evidence="1">tRNA N6-adenosine threonylcarbamoyltransferase</fullName>
        <ecNumber evidence="1">2.3.1.234</ecNumber>
    </recommendedName>
    <alternativeName>
        <fullName evidence="1">N6-L-threonylcarbamoyladenine synthase</fullName>
        <shortName evidence="1">t(6)A synthase</shortName>
    </alternativeName>
    <alternativeName>
        <fullName evidence="1">t(6)A37 threonylcarbamoyladenosine biosynthesis protein TsaD</fullName>
    </alternativeName>
    <alternativeName>
        <fullName evidence="1">tRNA threonylcarbamoyladenosine biosynthesis protein TsaD</fullName>
    </alternativeName>
</protein>
<proteinExistence type="inferred from homology"/>
<name>TSAD_LISMC</name>
<accession>C1KX28</accession>
<gene>
    <name evidence="1" type="primary">tsaD</name>
    <name type="synonym">gcp</name>
    <name type="ordered locus">Lm4b_02096</name>
</gene>